<dbReference type="EMBL" id="AM181176">
    <property type="protein sequence ID" value="CAY46375.1"/>
    <property type="molecule type" value="Genomic_DNA"/>
</dbReference>
<dbReference type="RefSeq" id="WP_003170804.1">
    <property type="nucleotide sequence ID" value="NC_012660.1"/>
</dbReference>
<dbReference type="STRING" id="294.SRM1_00103"/>
<dbReference type="eggNOG" id="COG5487">
    <property type="taxonomic scope" value="Bacteria"/>
</dbReference>
<dbReference type="HOGENOM" id="CLU_187346_2_1_6"/>
<dbReference type="GO" id="GO:0005886">
    <property type="term" value="C:plasma membrane"/>
    <property type="evidence" value="ECO:0007669"/>
    <property type="project" value="UniProtKB-SubCell"/>
</dbReference>
<dbReference type="HAMAP" id="MF_01361">
    <property type="entry name" value="UPF0391"/>
    <property type="match status" value="1"/>
</dbReference>
<dbReference type="InterPro" id="IPR009760">
    <property type="entry name" value="DUF1328"/>
</dbReference>
<dbReference type="NCBIfam" id="NF010226">
    <property type="entry name" value="PRK13682.1-1"/>
    <property type="match status" value="1"/>
</dbReference>
<dbReference type="NCBIfam" id="NF010229">
    <property type="entry name" value="PRK13682.1-4"/>
    <property type="match status" value="1"/>
</dbReference>
<dbReference type="Pfam" id="PF07043">
    <property type="entry name" value="DUF1328"/>
    <property type="match status" value="1"/>
</dbReference>
<dbReference type="PIRSF" id="PIRSF036466">
    <property type="entry name" value="UCP036466"/>
    <property type="match status" value="1"/>
</dbReference>
<feature type="chain" id="PRO_1000214877" description="UPF0391 membrane protein PFLU_0090">
    <location>
        <begin position="1"/>
        <end position="54"/>
    </location>
</feature>
<feature type="transmembrane region" description="Helical" evidence="1">
    <location>
        <begin position="4"/>
        <end position="24"/>
    </location>
</feature>
<feature type="transmembrane region" description="Helical" evidence="1">
    <location>
        <begin position="29"/>
        <end position="49"/>
    </location>
</feature>
<gene>
    <name type="ordered locus">PFLU_0090</name>
</gene>
<accession>C3K6U0</accession>
<organism>
    <name type="scientific">Pseudomonas fluorescens (strain SBW25)</name>
    <dbReference type="NCBI Taxonomy" id="216595"/>
    <lineage>
        <taxon>Bacteria</taxon>
        <taxon>Pseudomonadati</taxon>
        <taxon>Pseudomonadota</taxon>
        <taxon>Gammaproteobacteria</taxon>
        <taxon>Pseudomonadales</taxon>
        <taxon>Pseudomonadaceae</taxon>
        <taxon>Pseudomonas</taxon>
    </lineage>
</organism>
<proteinExistence type="inferred from homology"/>
<sequence length="54" mass="5710">MLSWAITFLIIAIVAAVLGFGGIAGTATGIAKILFVVFLVMFIASFFFGRRGRG</sequence>
<protein>
    <recommendedName>
        <fullName evidence="1">UPF0391 membrane protein PFLU_0090</fullName>
    </recommendedName>
</protein>
<keyword id="KW-1003">Cell membrane</keyword>
<keyword id="KW-0472">Membrane</keyword>
<keyword id="KW-0812">Transmembrane</keyword>
<keyword id="KW-1133">Transmembrane helix</keyword>
<reference key="1">
    <citation type="journal article" date="2009" name="Genome Biol.">
        <title>Genomic and genetic analyses of diversity and plant interactions of Pseudomonas fluorescens.</title>
        <authorList>
            <person name="Silby M.W."/>
            <person name="Cerdeno-Tarraga A.M."/>
            <person name="Vernikos G.S."/>
            <person name="Giddens S.R."/>
            <person name="Jackson R.W."/>
            <person name="Preston G.M."/>
            <person name="Zhang X.-X."/>
            <person name="Moon C.D."/>
            <person name="Gehrig S.M."/>
            <person name="Godfrey S.A.C."/>
            <person name="Knight C.G."/>
            <person name="Malone J.G."/>
            <person name="Robinson Z."/>
            <person name="Spiers A.J."/>
            <person name="Harris S."/>
            <person name="Challis G.L."/>
            <person name="Yaxley A.M."/>
            <person name="Harris D."/>
            <person name="Seeger K."/>
            <person name="Murphy L."/>
            <person name="Rutter S."/>
            <person name="Squares R."/>
            <person name="Quail M.A."/>
            <person name="Saunders E."/>
            <person name="Mavromatis K."/>
            <person name="Brettin T.S."/>
            <person name="Bentley S.D."/>
            <person name="Hothersall J."/>
            <person name="Stephens E."/>
            <person name="Thomas C.M."/>
            <person name="Parkhill J."/>
            <person name="Levy S.B."/>
            <person name="Rainey P.B."/>
            <person name="Thomson N.R."/>
        </authorList>
    </citation>
    <scope>NUCLEOTIDE SEQUENCE [LARGE SCALE GENOMIC DNA]</scope>
    <source>
        <strain>SBW25</strain>
    </source>
</reference>
<evidence type="ECO:0000255" key="1">
    <source>
        <dbReference type="HAMAP-Rule" id="MF_01361"/>
    </source>
</evidence>
<name>Y090_PSEFS</name>
<comment type="subcellular location">
    <subcellularLocation>
        <location evidence="1">Cell membrane</location>
        <topology evidence="1">Multi-pass membrane protein</topology>
    </subcellularLocation>
</comment>
<comment type="similarity">
    <text evidence="1">Belongs to the UPF0391 family.</text>
</comment>